<sequence>MRILILNPPHPAIGSRIPKEQLPPLGLLSIGGPLLDAGHDVTLLDAEFGPLTDSEIVERVCAHCPQLLLIGHSGSTSAHPIVCRLTLFLRERLPNLIIVYGGVFPTYHFHDILTKEPQIDFIVRGEGEATVAKLIAALENHNDLNKVDGIAFRRDEQIIETLPAPMIQDLDVYRVGWELVDLKKYSYYGGKQAVVIQFSRGCPHLCNYCGQRGFWARWRHRDPKKFAQEIVWLHRTHGVQLFNLADENPTVNKAIWQEFCEAIIAENISITIIGSTRADDIVRDADILHLYRRAGVERFLLGMENTNEATLKHIRKGSKTSTDREAIRLLRQHNILSLATWVTDFEEVRDRDFIQALKQLLYYDPDQIMSLYVTPHRWTSFYGIASERRVIQLDQTKWDYKHQVLAATHMPPWRIFLWVKLIEILLQTRPKALWRLLFQPNKASRRGMYWFTLMGRRVLVHELINFFFGDRRVKNGPTLQEFWGMPQEHQEIPLSITRK</sequence>
<accession>Q55373</accession>
<feature type="chain" id="PRO_0000064875" description="Anaerobic magnesium-protoporphyrin IX monomethyl ester cyclase">
    <location>
        <begin position="1"/>
        <end position="499"/>
    </location>
</feature>
<feature type="domain" description="B12-binding" evidence="2">
    <location>
        <begin position="9"/>
        <end position="145"/>
    </location>
</feature>
<feature type="domain" description="Radical SAM core" evidence="3">
    <location>
        <begin position="188"/>
        <end position="420"/>
    </location>
</feature>
<feature type="binding site" evidence="1">
    <location>
        <position position="202"/>
    </location>
    <ligand>
        <name>[4Fe-4S] cluster</name>
        <dbReference type="ChEBI" id="CHEBI:49883"/>
    </ligand>
</feature>
<feature type="binding site" evidence="1">
    <location>
        <position position="206"/>
    </location>
    <ligand>
        <name>[4Fe-4S] cluster</name>
        <dbReference type="ChEBI" id="CHEBI:49883"/>
    </ligand>
</feature>
<feature type="binding site" evidence="1">
    <location>
        <position position="209"/>
    </location>
    <ligand>
        <name>[4Fe-4S] cluster</name>
        <dbReference type="ChEBI" id="CHEBI:49883"/>
    </ligand>
</feature>
<keyword id="KW-0004">4Fe-4S</keyword>
<keyword id="KW-0149">Chlorophyll biosynthesis</keyword>
<keyword id="KW-0846">Cobalamin</keyword>
<keyword id="KW-0170">Cobalt</keyword>
<keyword id="KW-0408">Iron</keyword>
<keyword id="KW-0411">Iron-sulfur</keyword>
<keyword id="KW-0479">Metal-binding</keyword>
<keyword id="KW-0560">Oxidoreductase</keyword>
<keyword id="KW-0602">Photosynthesis</keyword>
<keyword id="KW-1185">Reference proteome</keyword>
<keyword id="KW-0949">S-adenosyl-L-methionine</keyword>
<proteinExistence type="inferred from homology"/>
<comment type="function">
    <text evidence="1">Involved in the tetrapyrrole biosynthetic pathways leading to chlorophyll and bacteriochlorophyll (BChl). Catalyzes the anaerobic formation of the isocyclic ring (E-ring) in Mg-protoporphyrin monomethyl ester (MPE) to yield protochlorophyllide a (PChlide a) via a six-electron oxidation and the formation of an oxo group at position C13 using oxygen from a water molecule.</text>
</comment>
<comment type="catalytic activity">
    <reaction evidence="1">
        <text>Mg-protoporphyrin IX 13-monomethyl ester + 3 S-adenosyl-L-methionine + H2O = 3,8-divinyl protochlorophyllide a + 3 5'-deoxyadenosine + 3 L-methionine + 4 H(+)</text>
        <dbReference type="Rhea" id="RHEA:49096"/>
        <dbReference type="ChEBI" id="CHEBI:15377"/>
        <dbReference type="ChEBI" id="CHEBI:15378"/>
        <dbReference type="ChEBI" id="CHEBI:17319"/>
        <dbReference type="ChEBI" id="CHEBI:57844"/>
        <dbReference type="ChEBI" id="CHEBI:58632"/>
        <dbReference type="ChEBI" id="CHEBI:59789"/>
        <dbReference type="ChEBI" id="CHEBI:60491"/>
        <dbReference type="EC" id="1.21.98.3"/>
    </reaction>
</comment>
<comment type="cofactor">
    <cofactor evidence="1">
        <name>[4Fe-4S] cluster</name>
        <dbReference type="ChEBI" id="CHEBI:49883"/>
    </cofactor>
    <text evidence="1">Binds 1 [4Fe-4S] cluster.</text>
</comment>
<comment type="cofactor">
    <cofactor evidence="1">
        <name>adenosylcob(III)alamin</name>
        <dbReference type="ChEBI" id="CHEBI:18408"/>
    </cofactor>
    <text evidence="1">Binds 1 adenosylcobalamin.</text>
</comment>
<comment type="pathway">
    <text evidence="1">Porphyrin-containing compound metabolism; bacteriochlorophyll biosynthesis (light-independent).</text>
</comment>
<comment type="similarity">
    <text evidence="4">Belongs to the BchE family.</text>
</comment>
<gene>
    <name evidence="1" type="primary">bchE</name>
    <name type="ordered locus">slr0905</name>
</gene>
<evidence type="ECO:0000250" key="1">
    <source>
        <dbReference type="UniProtKB" id="P26168"/>
    </source>
</evidence>
<evidence type="ECO:0000255" key="2">
    <source>
        <dbReference type="PROSITE-ProRule" id="PRU00666"/>
    </source>
</evidence>
<evidence type="ECO:0000255" key="3">
    <source>
        <dbReference type="PROSITE-ProRule" id="PRU01266"/>
    </source>
</evidence>
<evidence type="ECO:0000305" key="4"/>
<reference key="1">
    <citation type="journal article" date="1995" name="DNA Res.">
        <title>Sequence analysis of the genome of the unicellular cyanobacterium Synechocystis sp. strain PCC6803. I. Sequence features in the 1 Mb region from map positions 64% to 92% of the genome.</title>
        <authorList>
            <person name="Kaneko T."/>
            <person name="Tanaka A."/>
            <person name="Sato S."/>
            <person name="Kotani H."/>
            <person name="Sazuka T."/>
            <person name="Miyajima N."/>
            <person name="Sugiura M."/>
            <person name="Tabata S."/>
        </authorList>
    </citation>
    <scope>NUCLEOTIDE SEQUENCE [LARGE SCALE GENOMIC DNA]</scope>
    <source>
        <strain>ATCC 27184 / PCC 6803 / N-1</strain>
    </source>
</reference>
<reference key="2">
    <citation type="journal article" date="1996" name="DNA Res.">
        <title>Sequence analysis of the genome of the unicellular cyanobacterium Synechocystis sp. strain PCC6803. II. Sequence determination of the entire genome and assignment of potential protein-coding regions.</title>
        <authorList>
            <person name="Kaneko T."/>
            <person name="Sato S."/>
            <person name="Kotani H."/>
            <person name="Tanaka A."/>
            <person name="Asamizu E."/>
            <person name="Nakamura Y."/>
            <person name="Miyajima N."/>
            <person name="Hirosawa M."/>
            <person name="Sugiura M."/>
            <person name="Sasamoto S."/>
            <person name="Kimura T."/>
            <person name="Hosouchi T."/>
            <person name="Matsuno A."/>
            <person name="Muraki A."/>
            <person name="Nakazaki N."/>
            <person name="Naruo K."/>
            <person name="Okumura S."/>
            <person name="Shimpo S."/>
            <person name="Takeuchi C."/>
            <person name="Wada T."/>
            <person name="Watanabe A."/>
            <person name="Yamada M."/>
            <person name="Yasuda M."/>
            <person name="Tabata S."/>
        </authorList>
    </citation>
    <scope>NUCLEOTIDE SEQUENCE [LARGE SCALE GENOMIC DNA]</scope>
    <source>
        <strain>ATCC 27184 / PCC 6803 / Kazusa</strain>
    </source>
</reference>
<name>BCHE_SYNY3</name>
<dbReference type="EC" id="1.21.98.3" evidence="1"/>
<dbReference type="EMBL" id="BA000022">
    <property type="protein sequence ID" value="BAA10457.1"/>
    <property type="molecule type" value="Genomic_DNA"/>
</dbReference>
<dbReference type="PIR" id="S75722">
    <property type="entry name" value="S75722"/>
</dbReference>
<dbReference type="SMR" id="Q55373"/>
<dbReference type="IntAct" id="Q55373">
    <property type="interactions" value="1"/>
</dbReference>
<dbReference type="STRING" id="1148.gene:10499958"/>
<dbReference type="PaxDb" id="1148-1001215"/>
<dbReference type="EnsemblBacteria" id="BAA10457">
    <property type="protein sequence ID" value="BAA10457"/>
    <property type="gene ID" value="BAA10457"/>
</dbReference>
<dbReference type="KEGG" id="syn:slr0905"/>
<dbReference type="eggNOG" id="COG1032">
    <property type="taxonomic scope" value="Bacteria"/>
</dbReference>
<dbReference type="InParanoid" id="Q55373"/>
<dbReference type="PhylomeDB" id="Q55373"/>
<dbReference type="UniPathway" id="UPA00671"/>
<dbReference type="Proteomes" id="UP000001425">
    <property type="component" value="Chromosome"/>
</dbReference>
<dbReference type="GO" id="GO:0051539">
    <property type="term" value="F:4 iron, 4 sulfur cluster binding"/>
    <property type="evidence" value="ECO:0007669"/>
    <property type="project" value="UniProtKB-KW"/>
</dbReference>
<dbReference type="GO" id="GO:0031419">
    <property type="term" value="F:cobalamin binding"/>
    <property type="evidence" value="ECO:0007669"/>
    <property type="project" value="UniProtKB-KW"/>
</dbReference>
<dbReference type="GO" id="GO:0046872">
    <property type="term" value="F:metal ion binding"/>
    <property type="evidence" value="ECO:0007669"/>
    <property type="project" value="UniProtKB-KW"/>
</dbReference>
<dbReference type="GO" id="GO:0016491">
    <property type="term" value="F:oxidoreductase activity"/>
    <property type="evidence" value="ECO:0007669"/>
    <property type="project" value="UniProtKB-KW"/>
</dbReference>
<dbReference type="GO" id="GO:0036070">
    <property type="term" value="P:light-independent bacteriochlorophyll biosynthetic process"/>
    <property type="evidence" value="ECO:0007669"/>
    <property type="project" value="UniProtKB-UniPathway"/>
</dbReference>
<dbReference type="GO" id="GO:0015979">
    <property type="term" value="P:photosynthesis"/>
    <property type="evidence" value="ECO:0007669"/>
    <property type="project" value="UniProtKB-KW"/>
</dbReference>
<dbReference type="CDD" id="cd02068">
    <property type="entry name" value="radical_SAM_B12_BD"/>
    <property type="match status" value="1"/>
</dbReference>
<dbReference type="Gene3D" id="3.20.20.70">
    <property type="entry name" value="Aldolase class I"/>
    <property type="match status" value="1"/>
</dbReference>
<dbReference type="Gene3D" id="3.40.50.280">
    <property type="entry name" value="Cobalamin-binding domain"/>
    <property type="match status" value="1"/>
</dbReference>
<dbReference type="InterPro" id="IPR013785">
    <property type="entry name" value="Aldolase_TIM"/>
</dbReference>
<dbReference type="InterPro" id="IPR006158">
    <property type="entry name" value="Cobalamin-bd"/>
</dbReference>
<dbReference type="InterPro" id="IPR006638">
    <property type="entry name" value="Elp3/MiaA/NifB-like_rSAM"/>
</dbReference>
<dbReference type="InterPro" id="IPR034466">
    <property type="entry name" value="Methyltransferase_Class_B"/>
</dbReference>
<dbReference type="InterPro" id="IPR007197">
    <property type="entry name" value="rSAM"/>
</dbReference>
<dbReference type="InterPro" id="IPR051198">
    <property type="entry name" value="Tetrapyrrole_Bchl_Biosynth_MTs"/>
</dbReference>
<dbReference type="NCBIfam" id="TIGR02026">
    <property type="entry name" value="BchE"/>
    <property type="match status" value="1"/>
</dbReference>
<dbReference type="PANTHER" id="PTHR43409:SF13">
    <property type="entry name" value="ANAEROBIC MAGNESIUM-PROTOPORPHYRIN IX MONOMETHYL ESTER CYCLASE"/>
    <property type="match status" value="1"/>
</dbReference>
<dbReference type="PANTHER" id="PTHR43409">
    <property type="entry name" value="ANAEROBIC MAGNESIUM-PROTOPORPHYRIN IX MONOMETHYL ESTER CYCLASE-RELATED"/>
    <property type="match status" value="1"/>
</dbReference>
<dbReference type="Pfam" id="PF02310">
    <property type="entry name" value="B12-binding"/>
    <property type="match status" value="1"/>
</dbReference>
<dbReference type="Pfam" id="PF04055">
    <property type="entry name" value="Radical_SAM"/>
    <property type="match status" value="1"/>
</dbReference>
<dbReference type="SFLD" id="SFLDG01082">
    <property type="entry name" value="B12-binding_domain_containing"/>
    <property type="match status" value="1"/>
</dbReference>
<dbReference type="SFLD" id="SFLDG01123">
    <property type="entry name" value="methyltransferase_(Class_B)"/>
    <property type="match status" value="1"/>
</dbReference>
<dbReference type="SMART" id="SM00729">
    <property type="entry name" value="Elp3"/>
    <property type="match status" value="1"/>
</dbReference>
<dbReference type="SUPFAM" id="SSF102114">
    <property type="entry name" value="Radical SAM enzymes"/>
    <property type="match status" value="1"/>
</dbReference>
<dbReference type="PROSITE" id="PS51332">
    <property type="entry name" value="B12_BINDING"/>
    <property type="match status" value="1"/>
</dbReference>
<dbReference type="PROSITE" id="PS51918">
    <property type="entry name" value="RADICAL_SAM"/>
    <property type="match status" value="1"/>
</dbReference>
<protein>
    <recommendedName>
        <fullName evidence="1">Anaerobic magnesium-protoporphyrin IX monomethyl ester cyclase</fullName>
        <shortName evidence="1">MPE cyclase</shortName>
        <ecNumber evidence="1">1.21.98.3</ecNumber>
    </recommendedName>
</protein>
<organism>
    <name type="scientific">Synechocystis sp. (strain ATCC 27184 / PCC 6803 / Kazusa)</name>
    <dbReference type="NCBI Taxonomy" id="1111708"/>
    <lineage>
        <taxon>Bacteria</taxon>
        <taxon>Bacillati</taxon>
        <taxon>Cyanobacteriota</taxon>
        <taxon>Cyanophyceae</taxon>
        <taxon>Synechococcales</taxon>
        <taxon>Merismopediaceae</taxon>
        <taxon>Synechocystis</taxon>
    </lineage>
</organism>